<organism>
    <name type="scientific">Parabuthus granulatus</name>
    <name type="common">Granulated thick-tailed scorpion</name>
    <name type="synonym">Androctonus granulatus</name>
    <dbReference type="NCBI Taxonomy" id="242110"/>
    <lineage>
        <taxon>Eukaryota</taxon>
        <taxon>Metazoa</taxon>
        <taxon>Ecdysozoa</taxon>
        <taxon>Arthropoda</taxon>
        <taxon>Chelicerata</taxon>
        <taxon>Arachnida</taxon>
        <taxon>Scorpiones</taxon>
        <taxon>Buthida</taxon>
        <taxon>Buthoidea</taxon>
        <taxon>Buthidae</taxon>
        <taxon>Parabuthus</taxon>
    </lineage>
</organism>
<name>KA113_PARGR</name>
<comment type="function">
    <text evidence="2">Binds and inhibits voltage-sensitive potassium channels. Inhibits the vertebrate potassium channel Kv1.1/KCNA1 with low affinity.</text>
</comment>
<comment type="subcellular location">
    <subcellularLocation>
        <location evidence="2">Secreted</location>
    </subcellularLocation>
</comment>
<comment type="tissue specificity">
    <text evidence="5">Expressed by the venom gland.</text>
</comment>
<comment type="domain">
    <text evidence="4">Has the structural arrangement of an alpha-helix connected to antiparallel beta-sheets by disulfide bonds (CS-alpha/beta).</text>
</comment>
<comment type="similarity">
    <text evidence="4">Belongs to the short scorpion toxin superfamily. Potassium channel inhibitor family. Alpha-KTx 11 subfamily.</text>
</comment>
<reference evidence="6" key="1">
    <citation type="journal article" date="2004" name="J. Biol. Chem.">
        <title>A subfamily of acidic alpha-K(+) toxins.</title>
        <authorList>
            <person name="Huys I."/>
            <person name="Olamendi-Portugal T."/>
            <person name="Garcia-Gomez B.I."/>
            <person name="Vandenberghe I."/>
            <person name="Van Beeumen J."/>
            <person name="Dyason K."/>
            <person name="Clynen E."/>
            <person name="Zhu S."/>
            <person name="van der Walt J."/>
            <person name="Possani L.D."/>
            <person name="Tytgat J."/>
        </authorList>
    </citation>
    <scope>NUCLEOTIDE SEQUENCE [MRNA]</scope>
    <scope>PROTEIN SEQUENCE</scope>
    <scope>FUNCTION</scope>
    <scope>SUBCELLULAR LOCATION</scope>
    <source>
        <tissue>Venom</tissue>
    </source>
</reference>
<protein>
    <recommendedName>
        <fullName evidence="3">Potassium channel toxin alpha-KTx 11.3</fullName>
    </recommendedName>
    <alternativeName>
        <fullName evidence="3">Parabutoxin-10</fullName>
        <shortName evidence="3">PBTx10</shortName>
    </alternativeName>
</protein>
<sequence length="36" mass="3937">DEEPKETCSDDMCVIYCKGEEFSTGACDGPQKCKCS</sequence>
<feature type="peptide" id="PRO_0000044918" description="Potassium channel toxin alpha-KTx 11.3" evidence="2">
    <location>
        <begin position="1"/>
        <end position="36"/>
    </location>
</feature>
<feature type="disulfide bond" evidence="1">
    <location>
        <begin position="8"/>
        <end position="27"/>
    </location>
</feature>
<feature type="disulfide bond" evidence="1">
    <location>
        <begin position="13"/>
        <end position="33"/>
    </location>
</feature>
<feature type="disulfide bond" evidence="1">
    <location>
        <begin position="17"/>
        <end position="35"/>
    </location>
</feature>
<evidence type="ECO:0000255" key="1">
    <source>
        <dbReference type="PROSITE-ProRule" id="PRU01209"/>
    </source>
</evidence>
<evidence type="ECO:0000269" key="2">
    <source>
    </source>
</evidence>
<evidence type="ECO:0000303" key="3">
    <source>
    </source>
</evidence>
<evidence type="ECO:0000305" key="4"/>
<evidence type="ECO:0000305" key="5">
    <source>
    </source>
</evidence>
<evidence type="ECO:0000312" key="6">
    <source>
        <dbReference type="EMBL" id="AAQ23195.1"/>
    </source>
</evidence>
<dbReference type="EMBL" id="AY288306">
    <property type="protein sequence ID" value="AAQ23195.1"/>
    <property type="molecule type" value="mRNA"/>
</dbReference>
<dbReference type="SMR" id="Q6WGI9"/>
<dbReference type="TCDB" id="8.B.2.2.1">
    <property type="family name" value="the short scorpion toxin (s-st) family"/>
</dbReference>
<dbReference type="GO" id="GO:0005576">
    <property type="term" value="C:extracellular region"/>
    <property type="evidence" value="ECO:0000314"/>
    <property type="project" value="UniProtKB"/>
</dbReference>
<dbReference type="GO" id="GO:0019870">
    <property type="term" value="F:potassium channel inhibitor activity"/>
    <property type="evidence" value="ECO:0000314"/>
    <property type="project" value="UniProtKB"/>
</dbReference>
<dbReference type="GO" id="GO:0090729">
    <property type="term" value="F:toxin activity"/>
    <property type="evidence" value="ECO:0000314"/>
    <property type="project" value="UniProtKB"/>
</dbReference>
<dbReference type="GO" id="GO:0044562">
    <property type="term" value="P:envenomation resulting in negative regulation of voltage-gated potassium channel activity in another organism"/>
    <property type="evidence" value="ECO:0000314"/>
    <property type="project" value="UniProtKB"/>
</dbReference>
<dbReference type="InterPro" id="IPR012635">
    <property type="entry name" value="Parabutoxin"/>
</dbReference>
<dbReference type="Pfam" id="PF08119">
    <property type="entry name" value="Toxin_31"/>
    <property type="match status" value="1"/>
</dbReference>
<keyword id="KW-0903">Direct protein sequencing</keyword>
<keyword id="KW-1015">Disulfide bond</keyword>
<keyword id="KW-0872">Ion channel impairing toxin</keyword>
<keyword id="KW-0528">Neurotoxin</keyword>
<keyword id="KW-0632">Potassium channel impairing toxin</keyword>
<keyword id="KW-0964">Secreted</keyword>
<keyword id="KW-0800">Toxin</keyword>
<keyword id="KW-1220">Voltage-gated potassium channel impairing toxin</keyword>
<proteinExistence type="evidence at protein level"/>
<accession>Q6WGI9</accession>